<accession>Q9HS52</accession>
<keyword id="KW-0030">Aminoacyl-tRNA synthetase</keyword>
<keyword id="KW-0067">ATP-binding</keyword>
<keyword id="KW-0963">Cytoplasm</keyword>
<keyword id="KW-0436">Ligase</keyword>
<keyword id="KW-0547">Nucleotide-binding</keyword>
<keyword id="KW-0648">Protein biosynthesis</keyword>
<keyword id="KW-1185">Reference proteome</keyword>
<reference key="1">
    <citation type="journal article" date="2000" name="Proc. Natl. Acad. Sci. U.S.A.">
        <title>Genome sequence of Halobacterium species NRC-1.</title>
        <authorList>
            <person name="Ng W.V."/>
            <person name="Kennedy S.P."/>
            <person name="Mahairas G.G."/>
            <person name="Berquist B."/>
            <person name="Pan M."/>
            <person name="Shukla H.D."/>
            <person name="Lasky S.R."/>
            <person name="Baliga N.S."/>
            <person name="Thorsson V."/>
            <person name="Sbrogna J."/>
            <person name="Swartzell S."/>
            <person name="Weir D."/>
            <person name="Hall J."/>
            <person name="Dahl T.A."/>
            <person name="Welti R."/>
            <person name="Goo Y.A."/>
            <person name="Leithauser B."/>
            <person name="Keller K."/>
            <person name="Cruz R."/>
            <person name="Danson M.J."/>
            <person name="Hough D.W."/>
            <person name="Maddocks D.G."/>
            <person name="Jablonski P.E."/>
            <person name="Krebs M.P."/>
            <person name="Angevine C.M."/>
            <person name="Dale H."/>
            <person name="Isenbarger T.A."/>
            <person name="Peck R.F."/>
            <person name="Pohlschroder M."/>
            <person name="Spudich J.L."/>
            <person name="Jung K.-H."/>
            <person name="Alam M."/>
            <person name="Freitas T."/>
            <person name="Hou S."/>
            <person name="Daniels C.J."/>
            <person name="Dennis P.P."/>
            <person name="Omer A.D."/>
            <person name="Ebhardt H."/>
            <person name="Lowe T.M."/>
            <person name="Liang P."/>
            <person name="Riley M."/>
            <person name="Hood L."/>
            <person name="DasSarma S."/>
        </authorList>
    </citation>
    <scope>NUCLEOTIDE SEQUENCE [LARGE SCALE GENOMIC DNA]</scope>
    <source>
        <strain>ATCC 700922 / JCM 11081 / NRC-1</strain>
    </source>
</reference>
<feature type="chain" id="PRO_0000249157" description="Proline--tRNA ligase">
    <location>
        <begin position="1"/>
        <end position="501"/>
    </location>
</feature>
<gene>
    <name evidence="1" type="primary">proS</name>
    <name type="ordered locus">VNG_0403G</name>
</gene>
<evidence type="ECO:0000255" key="1">
    <source>
        <dbReference type="HAMAP-Rule" id="MF_01571"/>
    </source>
</evidence>
<evidence type="ECO:0000305" key="2"/>
<name>SYP_HALSA</name>
<sequence length="501" mass="56123">MSDDDQELGITESKEHSPGDWYAEVVQKAGLADYAPMGGFIVTRPRGYALWEAIQDNLDGWFKDTGVENAYFPMFIPEDYLEREKDIVEGFDPEVAWVTQGGHDDLDQRLAVRPTSESIIAPYLSQWVRSHRDLPLRVNQWNSVVRWEATETKPFFRTKEFLWQEGHTAHATDEAAWAETTLRLDQYHRLYEDVLGIPVLRGRKPDHDKFPGADTTMSVEALMPDGKSVQGGTSHHLGQSFADAFDITFADEDEAERTAYTTSWGLSWRAIGALVMSHSDDQGLVLPPTVAPKQVVIVPIWQEDTKDDVEQYGAEIAAELEAQGVRVHFDDRDGRNPGFKFNEWELNGVPVRFEIGPNEVEDDEVTVVHRPDGESTVEDRAAIADRVHDHLDEVYDKLYDAAADRLAENVREADNRADILGTIGQHGGYVKAPWCGDQDCEAEIKDQIAAEIVMVPLGEDSAARAASELEGERVPEPDHDGEDCAICGDEATRTAYFAKSY</sequence>
<dbReference type="EC" id="6.1.1.15" evidence="1"/>
<dbReference type="EMBL" id="AE004437">
    <property type="protein sequence ID" value="AAG18956.1"/>
    <property type="status" value="ALT_INIT"/>
    <property type="molecule type" value="Genomic_DNA"/>
</dbReference>
<dbReference type="PIR" id="H84198">
    <property type="entry name" value="H84198"/>
</dbReference>
<dbReference type="RefSeq" id="WP_010902251.1">
    <property type="nucleotide sequence ID" value="NC_002607.1"/>
</dbReference>
<dbReference type="SMR" id="Q9HS52"/>
<dbReference type="FunCoup" id="Q9HS52">
    <property type="interactions" value="134"/>
</dbReference>
<dbReference type="STRING" id="64091.VNG_0403G"/>
<dbReference type="PaxDb" id="64091-VNG_0403G"/>
<dbReference type="GeneID" id="68693326"/>
<dbReference type="KEGG" id="hal:VNG_0403G"/>
<dbReference type="PATRIC" id="fig|64091.14.peg.300"/>
<dbReference type="HOGENOM" id="CLU_001882_4_2_2"/>
<dbReference type="InParanoid" id="Q9HS52"/>
<dbReference type="OrthoDB" id="7375at2157"/>
<dbReference type="PhylomeDB" id="Q9HS52"/>
<dbReference type="Proteomes" id="UP000000554">
    <property type="component" value="Chromosome"/>
</dbReference>
<dbReference type="GO" id="GO:0017101">
    <property type="term" value="C:aminoacyl-tRNA synthetase multienzyme complex"/>
    <property type="evidence" value="ECO:0000318"/>
    <property type="project" value="GO_Central"/>
</dbReference>
<dbReference type="GO" id="GO:0005737">
    <property type="term" value="C:cytoplasm"/>
    <property type="evidence" value="ECO:0000318"/>
    <property type="project" value="GO_Central"/>
</dbReference>
<dbReference type="GO" id="GO:0005524">
    <property type="term" value="F:ATP binding"/>
    <property type="evidence" value="ECO:0007669"/>
    <property type="project" value="UniProtKB-UniRule"/>
</dbReference>
<dbReference type="GO" id="GO:0004827">
    <property type="term" value="F:proline-tRNA ligase activity"/>
    <property type="evidence" value="ECO:0000318"/>
    <property type="project" value="GO_Central"/>
</dbReference>
<dbReference type="GO" id="GO:0006433">
    <property type="term" value="P:prolyl-tRNA aminoacylation"/>
    <property type="evidence" value="ECO:0000318"/>
    <property type="project" value="GO_Central"/>
</dbReference>
<dbReference type="CDD" id="cd00862">
    <property type="entry name" value="ProRS_anticodon_zinc"/>
    <property type="match status" value="1"/>
</dbReference>
<dbReference type="CDD" id="cd00778">
    <property type="entry name" value="ProRS_core_arch_euk"/>
    <property type="match status" value="1"/>
</dbReference>
<dbReference type="FunFam" id="3.30.930.10:FF:000037">
    <property type="entry name" value="Proline--tRNA ligase"/>
    <property type="match status" value="1"/>
</dbReference>
<dbReference type="Gene3D" id="3.40.50.800">
    <property type="entry name" value="Anticodon-binding domain"/>
    <property type="match status" value="1"/>
</dbReference>
<dbReference type="Gene3D" id="3.30.930.10">
    <property type="entry name" value="Bira Bifunctional Protein, Domain 2"/>
    <property type="match status" value="1"/>
</dbReference>
<dbReference type="Gene3D" id="3.30.110.30">
    <property type="entry name" value="C-terminal domain of ProRS"/>
    <property type="match status" value="1"/>
</dbReference>
<dbReference type="HAMAP" id="MF_01571">
    <property type="entry name" value="Pro_tRNA_synth_type3"/>
    <property type="match status" value="1"/>
</dbReference>
<dbReference type="InterPro" id="IPR002314">
    <property type="entry name" value="aa-tRNA-synt_IIb"/>
</dbReference>
<dbReference type="InterPro" id="IPR006195">
    <property type="entry name" value="aa-tRNA-synth_II"/>
</dbReference>
<dbReference type="InterPro" id="IPR045864">
    <property type="entry name" value="aa-tRNA-synth_II/BPL/LPL"/>
</dbReference>
<dbReference type="InterPro" id="IPR004154">
    <property type="entry name" value="Anticodon-bd"/>
</dbReference>
<dbReference type="InterPro" id="IPR036621">
    <property type="entry name" value="Anticodon-bd_dom_sf"/>
</dbReference>
<dbReference type="InterPro" id="IPR002316">
    <property type="entry name" value="Pro-tRNA-ligase_IIa"/>
</dbReference>
<dbReference type="InterPro" id="IPR004499">
    <property type="entry name" value="Pro-tRNA-ligase_IIa_arc-type"/>
</dbReference>
<dbReference type="InterPro" id="IPR016061">
    <property type="entry name" value="Pro-tRNA_ligase_II_C"/>
</dbReference>
<dbReference type="InterPro" id="IPR017449">
    <property type="entry name" value="Pro-tRNA_synth_II"/>
</dbReference>
<dbReference type="InterPro" id="IPR033721">
    <property type="entry name" value="ProRS_core_arch_euk"/>
</dbReference>
<dbReference type="NCBIfam" id="TIGR00408">
    <property type="entry name" value="proS_fam_I"/>
    <property type="match status" value="1"/>
</dbReference>
<dbReference type="PANTHER" id="PTHR43382:SF2">
    <property type="entry name" value="BIFUNCTIONAL GLUTAMATE_PROLINE--TRNA LIGASE"/>
    <property type="match status" value="1"/>
</dbReference>
<dbReference type="PANTHER" id="PTHR43382">
    <property type="entry name" value="PROLYL-TRNA SYNTHETASE"/>
    <property type="match status" value="1"/>
</dbReference>
<dbReference type="Pfam" id="PF03129">
    <property type="entry name" value="HGTP_anticodon"/>
    <property type="match status" value="1"/>
</dbReference>
<dbReference type="Pfam" id="PF09180">
    <property type="entry name" value="ProRS-C_1"/>
    <property type="match status" value="1"/>
</dbReference>
<dbReference type="Pfam" id="PF00587">
    <property type="entry name" value="tRNA-synt_2b"/>
    <property type="match status" value="1"/>
</dbReference>
<dbReference type="PRINTS" id="PR01046">
    <property type="entry name" value="TRNASYNTHPRO"/>
</dbReference>
<dbReference type="SMART" id="SM00946">
    <property type="entry name" value="ProRS-C_1"/>
    <property type="match status" value="1"/>
</dbReference>
<dbReference type="SUPFAM" id="SSF64586">
    <property type="entry name" value="C-terminal domain of ProRS"/>
    <property type="match status" value="1"/>
</dbReference>
<dbReference type="SUPFAM" id="SSF52954">
    <property type="entry name" value="Class II aaRS ABD-related"/>
    <property type="match status" value="1"/>
</dbReference>
<dbReference type="SUPFAM" id="SSF55681">
    <property type="entry name" value="Class II aaRS and biotin synthetases"/>
    <property type="match status" value="1"/>
</dbReference>
<dbReference type="PROSITE" id="PS50862">
    <property type="entry name" value="AA_TRNA_LIGASE_II"/>
    <property type="match status" value="1"/>
</dbReference>
<proteinExistence type="inferred from homology"/>
<comment type="function">
    <text evidence="1">Catalyzes the attachment of proline to tRNA(Pro) in a two-step reaction: proline is first activated by ATP to form Pro-AMP and then transferred to the acceptor end of tRNA(Pro).</text>
</comment>
<comment type="catalytic activity">
    <reaction evidence="1">
        <text>tRNA(Pro) + L-proline + ATP = L-prolyl-tRNA(Pro) + AMP + diphosphate</text>
        <dbReference type="Rhea" id="RHEA:14305"/>
        <dbReference type="Rhea" id="RHEA-COMP:9700"/>
        <dbReference type="Rhea" id="RHEA-COMP:9702"/>
        <dbReference type="ChEBI" id="CHEBI:30616"/>
        <dbReference type="ChEBI" id="CHEBI:33019"/>
        <dbReference type="ChEBI" id="CHEBI:60039"/>
        <dbReference type="ChEBI" id="CHEBI:78442"/>
        <dbReference type="ChEBI" id="CHEBI:78532"/>
        <dbReference type="ChEBI" id="CHEBI:456215"/>
        <dbReference type="EC" id="6.1.1.15"/>
    </reaction>
</comment>
<comment type="subunit">
    <text evidence="1">Homodimer.</text>
</comment>
<comment type="subcellular location">
    <subcellularLocation>
        <location evidence="1">Cytoplasm</location>
    </subcellularLocation>
</comment>
<comment type="domain">
    <text evidence="1">Consists of three domains: the N-terminal catalytic domain, the anticodon-binding domain and the C-terminal extension.</text>
</comment>
<comment type="similarity">
    <text evidence="1">Belongs to the class-II aminoacyl-tRNA synthetase family. ProS type 3 subfamily.</text>
</comment>
<comment type="sequence caution" evidence="2">
    <conflict type="erroneous initiation">
        <sequence resource="EMBL-CDS" id="AAG18956"/>
    </conflict>
</comment>
<protein>
    <recommendedName>
        <fullName evidence="1">Proline--tRNA ligase</fullName>
        <ecNumber evidence="1">6.1.1.15</ecNumber>
    </recommendedName>
    <alternativeName>
        <fullName evidence="1">Prolyl-tRNA synthetase</fullName>
        <shortName evidence="1">ProRS</shortName>
    </alternativeName>
</protein>
<organism>
    <name type="scientific">Halobacterium salinarum (strain ATCC 700922 / JCM 11081 / NRC-1)</name>
    <name type="common">Halobacterium halobium</name>
    <dbReference type="NCBI Taxonomy" id="64091"/>
    <lineage>
        <taxon>Archaea</taxon>
        <taxon>Methanobacteriati</taxon>
        <taxon>Methanobacteriota</taxon>
        <taxon>Stenosarchaea group</taxon>
        <taxon>Halobacteria</taxon>
        <taxon>Halobacteriales</taxon>
        <taxon>Halobacteriaceae</taxon>
        <taxon>Halobacterium</taxon>
        <taxon>Halobacterium salinarum NRC-34001</taxon>
    </lineage>
</organism>